<sequence length="421" mass="44514">MTDLSTPDLPRMSAAIAEPTSHDPDSGGHFGGPSGWGGRYVPEALMAVIEEVTAAYQKERVSQDFLDDLDRLQANYAGRPSPLYEATRLSQHAGSARIFLKREDLNHTGSHKINNVLGQALLARRMGKTRVIAETGAGQHGVATATACALLGLDCVIYMGGIDTARQALNVARMRLLGAEVVAVQTGSKTLKDAINEAFRDWVANADNTYYCFGTAAGPHPFPTMVRDFQRIIGMEARVQIQGQAGRLPDAVVACVGGGSNAIGIFHAFLDDPGVRLVGFEAAGDGVETGRHAATFTAGSPGAFHGSFSYLLQDEDGQTIESHSISAGLDYPGVGPEHAWLKEAGRVDYRPITDSEAMDAFGLLCRMEGIIPAIESAHAVAGALKLGVELGRGAVIVVNLSGRGDKDVETAAKWFGLLGND</sequence>
<keyword id="KW-0028">Amino-acid biosynthesis</keyword>
<keyword id="KW-0057">Aromatic amino acid biosynthesis</keyword>
<keyword id="KW-0456">Lyase</keyword>
<keyword id="KW-0663">Pyridoxal phosphate</keyword>
<keyword id="KW-1185">Reference proteome</keyword>
<keyword id="KW-0822">Tryptophan biosynthesis</keyword>
<gene>
    <name type="primary">trpB</name>
    <name type="ordered locus">MT1647</name>
</gene>
<comment type="function">
    <text evidence="1">The beta subunit is responsible for the synthesis of L-tryptophan from indole and L-serine.</text>
</comment>
<comment type="catalytic activity">
    <reaction>
        <text>(1S,2R)-1-C-(indol-3-yl)glycerol 3-phosphate + L-serine = D-glyceraldehyde 3-phosphate + L-tryptophan + H2O</text>
        <dbReference type="Rhea" id="RHEA:10532"/>
        <dbReference type="ChEBI" id="CHEBI:15377"/>
        <dbReference type="ChEBI" id="CHEBI:33384"/>
        <dbReference type="ChEBI" id="CHEBI:57912"/>
        <dbReference type="ChEBI" id="CHEBI:58866"/>
        <dbReference type="ChEBI" id="CHEBI:59776"/>
        <dbReference type="EC" id="4.2.1.20"/>
    </reaction>
</comment>
<comment type="cofactor">
    <cofactor evidence="1">
        <name>pyridoxal 5'-phosphate</name>
        <dbReference type="ChEBI" id="CHEBI:597326"/>
    </cofactor>
</comment>
<comment type="pathway">
    <text>Amino-acid biosynthesis; L-tryptophan biosynthesis; L-tryptophan from chorismate: step 5/5.</text>
</comment>
<comment type="subunit">
    <text evidence="1">Tetramer of two alpha and two beta chains.</text>
</comment>
<comment type="similarity">
    <text evidence="3">Belongs to the TrpB family.</text>
</comment>
<comment type="sequence caution" evidence="2">
    <conflict type="erroneous initiation">
        <sequence resource="EMBL-CDS" id="AAK45916"/>
    </conflict>
    <text>Extended N-terminus.</text>
</comment>
<proteinExistence type="inferred from homology"/>
<organism>
    <name type="scientific">Mycobacterium tuberculosis (strain CDC 1551 / Oshkosh)</name>
    <dbReference type="NCBI Taxonomy" id="83331"/>
    <lineage>
        <taxon>Bacteria</taxon>
        <taxon>Bacillati</taxon>
        <taxon>Actinomycetota</taxon>
        <taxon>Actinomycetes</taxon>
        <taxon>Mycobacteriales</taxon>
        <taxon>Mycobacteriaceae</taxon>
        <taxon>Mycobacterium</taxon>
        <taxon>Mycobacterium tuberculosis complex</taxon>
    </lineage>
</organism>
<reference key="1">
    <citation type="journal article" date="2002" name="J. Bacteriol.">
        <title>Whole-genome comparison of Mycobacterium tuberculosis clinical and laboratory strains.</title>
        <authorList>
            <person name="Fleischmann R.D."/>
            <person name="Alland D."/>
            <person name="Eisen J.A."/>
            <person name="Carpenter L."/>
            <person name="White O."/>
            <person name="Peterson J.D."/>
            <person name="DeBoy R.T."/>
            <person name="Dodson R.J."/>
            <person name="Gwinn M.L."/>
            <person name="Haft D.H."/>
            <person name="Hickey E.K."/>
            <person name="Kolonay J.F."/>
            <person name="Nelson W.C."/>
            <person name="Umayam L.A."/>
            <person name="Ermolaeva M.D."/>
            <person name="Salzberg S.L."/>
            <person name="Delcher A."/>
            <person name="Utterback T.R."/>
            <person name="Weidman J.F."/>
            <person name="Khouri H.M."/>
            <person name="Gill J."/>
            <person name="Mikula A."/>
            <person name="Bishai W."/>
            <person name="Jacobs W.R. Jr."/>
            <person name="Venter J.C."/>
            <person name="Fraser C.M."/>
        </authorList>
    </citation>
    <scope>NUCLEOTIDE SEQUENCE [LARGE SCALE GENOMIC DNA]</scope>
    <source>
        <strain>CDC 1551 / Oshkosh</strain>
    </source>
</reference>
<feature type="chain" id="PRO_0000428459" description="Tryptophan synthase beta chain">
    <location>
        <begin position="1"/>
        <end position="421"/>
    </location>
</feature>
<feature type="modified residue" description="N6-(pyridoxal phosphate)lysine" evidence="1">
    <location>
        <position position="112"/>
    </location>
</feature>
<evidence type="ECO:0000250" key="1"/>
<evidence type="ECO:0000250" key="2">
    <source>
        <dbReference type="UniProtKB" id="P9WFX9"/>
    </source>
</evidence>
<evidence type="ECO:0000305" key="3"/>
<protein>
    <recommendedName>
        <fullName>Tryptophan synthase beta chain</fullName>
        <ecNumber>4.2.1.20</ecNumber>
    </recommendedName>
</protein>
<accession>P9WFX8</accession>
<accession>L0T779</accession>
<accession>O08376</accession>
<accession>P66984</accession>
<dbReference type="EC" id="4.2.1.20"/>
<dbReference type="EMBL" id="AE000516">
    <property type="protein sequence ID" value="AAK45916.1"/>
    <property type="status" value="ALT_INIT"/>
    <property type="molecule type" value="Genomic_DNA"/>
</dbReference>
<dbReference type="PIR" id="B70557">
    <property type="entry name" value="B70557"/>
</dbReference>
<dbReference type="RefSeq" id="WP_016721143.1">
    <property type="nucleotide sequence ID" value="NZ_KK341227.1"/>
</dbReference>
<dbReference type="SMR" id="P9WFX8"/>
<dbReference type="GeneID" id="45425580"/>
<dbReference type="KEGG" id="mtc:MT1647"/>
<dbReference type="HOGENOM" id="CLU_016734_3_1_11"/>
<dbReference type="UniPathway" id="UPA00035">
    <property type="reaction ID" value="UER00044"/>
</dbReference>
<dbReference type="Proteomes" id="UP000001020">
    <property type="component" value="Chromosome"/>
</dbReference>
<dbReference type="GO" id="GO:0005737">
    <property type="term" value="C:cytoplasm"/>
    <property type="evidence" value="ECO:0007669"/>
    <property type="project" value="TreeGrafter"/>
</dbReference>
<dbReference type="GO" id="GO:0004834">
    <property type="term" value="F:tryptophan synthase activity"/>
    <property type="evidence" value="ECO:0007669"/>
    <property type="project" value="UniProtKB-UniRule"/>
</dbReference>
<dbReference type="CDD" id="cd06446">
    <property type="entry name" value="Trp-synth_B"/>
    <property type="match status" value="1"/>
</dbReference>
<dbReference type="FunFam" id="3.40.50.1100:FF:000001">
    <property type="entry name" value="Tryptophan synthase beta chain"/>
    <property type="match status" value="1"/>
</dbReference>
<dbReference type="FunFam" id="3.40.50.1100:FF:000004">
    <property type="entry name" value="Tryptophan synthase beta chain"/>
    <property type="match status" value="1"/>
</dbReference>
<dbReference type="Gene3D" id="3.40.50.1100">
    <property type="match status" value="2"/>
</dbReference>
<dbReference type="HAMAP" id="MF_00133">
    <property type="entry name" value="Trp_synth_beta"/>
    <property type="match status" value="1"/>
</dbReference>
<dbReference type="InterPro" id="IPR006653">
    <property type="entry name" value="Trp_synth_b_CS"/>
</dbReference>
<dbReference type="InterPro" id="IPR006654">
    <property type="entry name" value="Trp_synth_beta"/>
</dbReference>
<dbReference type="InterPro" id="IPR023026">
    <property type="entry name" value="Trp_synth_beta/beta-like"/>
</dbReference>
<dbReference type="InterPro" id="IPR001926">
    <property type="entry name" value="TrpB-like_PALP"/>
</dbReference>
<dbReference type="InterPro" id="IPR036052">
    <property type="entry name" value="TrpB-like_PALP_sf"/>
</dbReference>
<dbReference type="NCBIfam" id="TIGR00263">
    <property type="entry name" value="trpB"/>
    <property type="match status" value="1"/>
</dbReference>
<dbReference type="PANTHER" id="PTHR48077:SF3">
    <property type="entry name" value="TRYPTOPHAN SYNTHASE"/>
    <property type="match status" value="1"/>
</dbReference>
<dbReference type="PANTHER" id="PTHR48077">
    <property type="entry name" value="TRYPTOPHAN SYNTHASE-RELATED"/>
    <property type="match status" value="1"/>
</dbReference>
<dbReference type="Pfam" id="PF00291">
    <property type="entry name" value="PALP"/>
    <property type="match status" value="1"/>
</dbReference>
<dbReference type="PIRSF" id="PIRSF001413">
    <property type="entry name" value="Trp_syn_beta"/>
    <property type="match status" value="1"/>
</dbReference>
<dbReference type="SUPFAM" id="SSF53686">
    <property type="entry name" value="Tryptophan synthase beta subunit-like PLP-dependent enzymes"/>
    <property type="match status" value="1"/>
</dbReference>
<dbReference type="PROSITE" id="PS00168">
    <property type="entry name" value="TRP_SYNTHASE_BETA"/>
    <property type="match status" value="1"/>
</dbReference>
<name>TRPB_MYCTO</name>